<evidence type="ECO:0000269" key="1">
    <source>
    </source>
</evidence>
<evidence type="ECO:0000269" key="2">
    <source>
    </source>
</evidence>
<evidence type="ECO:0000303" key="3">
    <source>
    </source>
</evidence>
<evidence type="ECO:0000303" key="4">
    <source>
    </source>
</evidence>
<evidence type="ECO:0000305" key="5">
    <source>
    </source>
</evidence>
<evidence type="ECO:0000305" key="6">
    <source>
    </source>
</evidence>
<evidence type="ECO:0000312" key="7">
    <source>
        <dbReference type="EMBL" id="CAF31241.1"/>
    </source>
</evidence>
<reference key="1">
    <citation type="journal article" date="2004" name="J. Bacteriol.">
        <title>Complete genome sequence of the genetically tractable hydrogenotrophic methanogen Methanococcus maripaludis.</title>
        <authorList>
            <person name="Hendrickson E.L."/>
            <person name="Kaul R."/>
            <person name="Zhou Y."/>
            <person name="Bovee D."/>
            <person name="Chapman P."/>
            <person name="Chung J."/>
            <person name="Conway de Macario E."/>
            <person name="Dodsworth J.A."/>
            <person name="Gillett W."/>
            <person name="Graham D.E."/>
            <person name="Hackett M."/>
            <person name="Haydock A.K."/>
            <person name="Kang A."/>
            <person name="Land M.L."/>
            <person name="Levy R."/>
            <person name="Lie T.J."/>
            <person name="Major T.A."/>
            <person name="Moore B.C."/>
            <person name="Porat I."/>
            <person name="Palmeiri A."/>
            <person name="Rouse G."/>
            <person name="Saenphimmachak C."/>
            <person name="Soell D."/>
            <person name="Van Dien S."/>
            <person name="Wang T."/>
            <person name="Whitman W.B."/>
            <person name="Xia Q."/>
            <person name="Zhang Y."/>
            <person name="Larimer F.W."/>
            <person name="Olson M.V."/>
            <person name="Leigh J.A."/>
        </authorList>
    </citation>
    <scope>NUCLEOTIDE SEQUENCE [LARGE SCALE GENOMIC DNA]</scope>
    <source>
        <strain>DSM 14266 / JCM 13030 / NBRC 101832 / S2 / LL</strain>
    </source>
</reference>
<reference key="2">
    <citation type="journal article" date="2011" name="J. Bacteriol.">
        <title>Genetic and mass spectrometry analyses of the unusual type IV-like pili of the archaeon Methanococcus maripaludis.</title>
        <authorList>
            <person name="Ng S.Y."/>
            <person name="Wu J."/>
            <person name="Nair D.B."/>
            <person name="Logan S.M."/>
            <person name="Robotham A."/>
            <person name="Tessier L."/>
            <person name="Kelly J.F."/>
            <person name="Uchida K."/>
            <person name="Aizawa S."/>
            <person name="Jarrell K.F."/>
        </authorList>
    </citation>
    <scope>FUNCTION</scope>
    <scope>SUBCELLULAR LOCATION</scope>
    <scope>CLEAVAGE OF N-TERMINUS</scope>
    <scope>GLYCOSYLATION</scope>
    <scope>MASS SPECTROMETRY</scope>
    <scope>PYROGLUTAMATE FORMATION AT GLN-13</scope>
    <scope>DISRUPTION PHENOTYPE</scope>
    <source>
        <strain>DSM 14266 / JCM 13030 / NBRC 101832 / S2 / LL</strain>
    </source>
</reference>
<reference key="3">
    <citation type="journal article" date="2015" name="Life">
        <title>Pilin Processing Follows a Different Temporal Route than That of Archaellins in Methanococcus maripaludis.</title>
        <authorList>
            <person name="Nair D.B."/>
            <person name="Jarrell K.F."/>
        </authorList>
    </citation>
    <scope>CLEAVAGE OF N-TERMINUS</scope>
    <scope>GLYCOSYLATION</scope>
    <source>
        <strain>DSM 14266 / JCM 13030 / NBRC 101832 / S2 / LL</strain>
    </source>
</reference>
<sequence length="74" mass="7788">MKFLEKLTSKKGQIAMELGILVMAAVAVAAIAAYFYATNVSNTGKQITNSTNQTTQALADAISDATSQMSNITD</sequence>
<dbReference type="EMBL" id="BX950229">
    <property type="protein sequence ID" value="CAF31241.1"/>
    <property type="molecule type" value="Genomic_DNA"/>
</dbReference>
<dbReference type="RefSeq" id="WP_011171629.1">
    <property type="nucleotide sequence ID" value="NC_005791.1"/>
</dbReference>
<dbReference type="SMR" id="Q6LWM4"/>
<dbReference type="STRING" id="267377.MMP1685"/>
<dbReference type="EnsemblBacteria" id="CAF31241">
    <property type="protein sequence ID" value="CAF31241"/>
    <property type="gene ID" value="MMP1685"/>
</dbReference>
<dbReference type="GeneID" id="2761610"/>
<dbReference type="KEGG" id="mmp:MMP1685"/>
<dbReference type="PATRIC" id="fig|267377.15.peg.1724"/>
<dbReference type="eggNOG" id="arCOG06620">
    <property type="taxonomic scope" value="Archaea"/>
</dbReference>
<dbReference type="HOGENOM" id="CLU_197251_0_0_2"/>
<dbReference type="OrthoDB" id="60698at2157"/>
<dbReference type="Proteomes" id="UP000000590">
    <property type="component" value="Chromosome"/>
</dbReference>
<dbReference type="GO" id="GO:0009986">
    <property type="term" value="C:cell surface"/>
    <property type="evidence" value="ECO:0007669"/>
    <property type="project" value="UniProtKB-SubCell"/>
</dbReference>
<dbReference type="GO" id="GO:0005576">
    <property type="term" value="C:extracellular region"/>
    <property type="evidence" value="ECO:0007669"/>
    <property type="project" value="UniProtKB-SubCell"/>
</dbReference>
<dbReference type="GO" id="GO:0016020">
    <property type="term" value="C:membrane"/>
    <property type="evidence" value="ECO:0007669"/>
    <property type="project" value="UniProtKB-KW"/>
</dbReference>
<dbReference type="InterPro" id="IPR007166">
    <property type="entry name" value="Class3_signal_pept_motif"/>
</dbReference>
<dbReference type="Pfam" id="PF04021">
    <property type="entry name" value="Class_IIIsignal"/>
    <property type="match status" value="1"/>
</dbReference>
<organism>
    <name type="scientific">Methanococcus maripaludis (strain DSM 14266 / JCM 13030 / NBRC 101832 / S2 / LL)</name>
    <dbReference type="NCBI Taxonomy" id="267377"/>
    <lineage>
        <taxon>Archaea</taxon>
        <taxon>Methanobacteriati</taxon>
        <taxon>Methanobacteriota</taxon>
        <taxon>Methanomada group</taxon>
        <taxon>Methanococci</taxon>
        <taxon>Methanococcales</taxon>
        <taxon>Methanococcaceae</taxon>
        <taxon>Methanococcus</taxon>
    </lineage>
</organism>
<keyword id="KW-0281">Fimbrium</keyword>
<keyword id="KW-0325">Glycoprotein</keyword>
<keyword id="KW-0873">Pyrrolidone carboxylic acid</keyword>
<keyword id="KW-1185">Reference proteome</keyword>
<keyword id="KW-0964">Secreted</keyword>
<accession>Q6LWM4</accession>
<proteinExistence type="evidence at protein level"/>
<name>EPDE_METMP</name>
<protein>
    <recommendedName>
        <fullName evidence="3">Major structural pilin EpdE</fullName>
    </recommendedName>
    <alternativeName>
        <fullName evidence="3">Type IV pilin-like protein MMP1685</fullName>
    </alternativeName>
</protein>
<gene>
    <name evidence="4" type="primary">epdE</name>
    <name evidence="7" type="ordered locus">MMP1685</name>
</gene>
<feature type="propeptide" id="PRO_0000462045" evidence="1 6">
    <location>
        <begin position="1"/>
        <end position="12"/>
    </location>
</feature>
<feature type="chain" id="PRO_0000218273" description="Major structural pilin EpdE">
    <location>
        <begin position="13"/>
        <end position="74"/>
    </location>
</feature>
<feature type="short sequence motif" description="QXSXEXXXL" evidence="5">
    <location>
        <begin position="13"/>
        <end position="21"/>
    </location>
</feature>
<feature type="modified residue" description="Pyrrolidone carboxylic acid" evidence="1">
    <location>
        <position position="13"/>
    </location>
</feature>
<comment type="function">
    <text evidence="1">Major component of the type IV-like pili.</text>
</comment>
<comment type="subcellular location">
    <subcellularLocation>
        <location evidence="5">Secreted</location>
    </subcellularLocation>
    <subcellularLocation>
        <location evidence="5">Cell surface</location>
    </subcellularLocation>
    <subcellularLocation>
        <location evidence="1">Fimbrium</location>
    </subcellularLocation>
</comment>
<comment type="domain">
    <text evidence="5">Contains an amino terminal motif QXSXEXXXL, which is part of a class III signal sequence.</text>
</comment>
<comment type="PTM">
    <text evidence="1 2">The N-terminus is cleaved by the prepilin peptidase EppA, which recognizes the class III signal sequence.</text>
</comment>
<comment type="PTM">
    <text evidence="1 2">N-glycosylated (PubMed:21075925, PubMed:25569238). Glycosylated with an N-linked branched pentasaccharide glycan (PubMed:21075925). May contain glycans at three sites (PubMed:21075925). Glycosylation is AglB-dependent (PubMed:25569238). The N-glycosylation does not occur unless the signal peptide has been cleaved first (PubMed:25569238).</text>
</comment>
<comment type="mass spectrometry" mass="9728.0" method="Electrospray" evidence="1">
    <text>Glycosylated form.</text>
</comment>
<comment type="disruption phenotype">
    <text evidence="1">Deletion mutant no longer produces pili at the cell surface.</text>
</comment>